<evidence type="ECO:0000255" key="1">
    <source>
        <dbReference type="HAMAP-Rule" id="MF_00607"/>
    </source>
</evidence>
<comment type="function">
    <text evidence="1">Specifically dimethylates two adjacent adenosines (A1518 and A1519) in the loop of a conserved hairpin near the 3'-end of 16S rRNA in the 30S particle. May play a critical role in biogenesis of 30S subunits.</text>
</comment>
<comment type="catalytic activity">
    <reaction evidence="1">
        <text>adenosine(1518)/adenosine(1519) in 16S rRNA + 4 S-adenosyl-L-methionine = N(6)-dimethyladenosine(1518)/N(6)-dimethyladenosine(1519) in 16S rRNA + 4 S-adenosyl-L-homocysteine + 4 H(+)</text>
        <dbReference type="Rhea" id="RHEA:19609"/>
        <dbReference type="Rhea" id="RHEA-COMP:10232"/>
        <dbReference type="Rhea" id="RHEA-COMP:10233"/>
        <dbReference type="ChEBI" id="CHEBI:15378"/>
        <dbReference type="ChEBI" id="CHEBI:57856"/>
        <dbReference type="ChEBI" id="CHEBI:59789"/>
        <dbReference type="ChEBI" id="CHEBI:74411"/>
        <dbReference type="ChEBI" id="CHEBI:74493"/>
        <dbReference type="EC" id="2.1.1.182"/>
    </reaction>
</comment>
<comment type="subcellular location">
    <subcellularLocation>
        <location evidence="1">Cytoplasm</location>
    </subcellularLocation>
</comment>
<comment type="similarity">
    <text evidence="1">Belongs to the class I-like SAM-binding methyltransferase superfamily. rRNA adenine N(6)-methyltransferase family. RsmA subfamily.</text>
</comment>
<feature type="chain" id="PRO_1000056614" description="Ribosomal RNA small subunit methyltransferase A">
    <location>
        <begin position="1"/>
        <end position="273"/>
    </location>
</feature>
<feature type="binding site" evidence="1">
    <location>
        <position position="18"/>
    </location>
    <ligand>
        <name>S-adenosyl-L-methionine</name>
        <dbReference type="ChEBI" id="CHEBI:59789"/>
    </ligand>
</feature>
<feature type="binding site" evidence="1">
    <location>
        <position position="20"/>
    </location>
    <ligand>
        <name>S-adenosyl-L-methionine</name>
        <dbReference type="ChEBI" id="CHEBI:59789"/>
    </ligand>
</feature>
<feature type="binding site" evidence="1">
    <location>
        <position position="45"/>
    </location>
    <ligand>
        <name>S-adenosyl-L-methionine</name>
        <dbReference type="ChEBI" id="CHEBI:59789"/>
    </ligand>
</feature>
<feature type="binding site" evidence="1">
    <location>
        <position position="66"/>
    </location>
    <ligand>
        <name>S-adenosyl-L-methionine</name>
        <dbReference type="ChEBI" id="CHEBI:59789"/>
    </ligand>
</feature>
<feature type="binding site" evidence="1">
    <location>
        <position position="91"/>
    </location>
    <ligand>
        <name>S-adenosyl-L-methionine</name>
        <dbReference type="ChEBI" id="CHEBI:59789"/>
    </ligand>
</feature>
<feature type="binding site" evidence="1">
    <location>
        <position position="113"/>
    </location>
    <ligand>
        <name>S-adenosyl-L-methionine</name>
        <dbReference type="ChEBI" id="CHEBI:59789"/>
    </ligand>
</feature>
<accession>A1A7A0</accession>
<dbReference type="EC" id="2.1.1.182" evidence="1"/>
<dbReference type="EMBL" id="CP000468">
    <property type="protein sequence ID" value="ABI99539.1"/>
    <property type="molecule type" value="Genomic_DNA"/>
</dbReference>
<dbReference type="RefSeq" id="WP_001065363.1">
    <property type="nucleotide sequence ID" value="NZ_CADILS010000013.1"/>
</dbReference>
<dbReference type="SMR" id="A1A7A0"/>
<dbReference type="KEGG" id="ecv:APECO1_1931"/>
<dbReference type="HOGENOM" id="CLU_041220_0_1_6"/>
<dbReference type="Proteomes" id="UP000008216">
    <property type="component" value="Chromosome"/>
</dbReference>
<dbReference type="GO" id="GO:0005829">
    <property type="term" value="C:cytosol"/>
    <property type="evidence" value="ECO:0007669"/>
    <property type="project" value="TreeGrafter"/>
</dbReference>
<dbReference type="GO" id="GO:0052908">
    <property type="term" value="F:16S rRNA (adenine(1518)-N(6)/adenine(1519)-N(6))-dimethyltransferase activity"/>
    <property type="evidence" value="ECO:0007669"/>
    <property type="project" value="UniProtKB-EC"/>
</dbReference>
<dbReference type="GO" id="GO:0003723">
    <property type="term" value="F:RNA binding"/>
    <property type="evidence" value="ECO:0007669"/>
    <property type="project" value="UniProtKB-KW"/>
</dbReference>
<dbReference type="FunFam" id="1.10.8.100:FF:000001">
    <property type="entry name" value="Ribosomal RNA small subunit methyltransferase A"/>
    <property type="match status" value="1"/>
</dbReference>
<dbReference type="FunFam" id="3.40.50.150:FF:000006">
    <property type="entry name" value="Ribosomal RNA small subunit methyltransferase A"/>
    <property type="match status" value="1"/>
</dbReference>
<dbReference type="Gene3D" id="1.10.8.100">
    <property type="entry name" value="Ribosomal RNA adenine dimethylase-like, domain 2"/>
    <property type="match status" value="1"/>
</dbReference>
<dbReference type="Gene3D" id="3.40.50.150">
    <property type="entry name" value="Vaccinia Virus protein VP39"/>
    <property type="match status" value="1"/>
</dbReference>
<dbReference type="HAMAP" id="MF_00607">
    <property type="entry name" value="16SrRNA_methyltr_A"/>
    <property type="match status" value="1"/>
</dbReference>
<dbReference type="InterPro" id="IPR001737">
    <property type="entry name" value="KsgA/Erm"/>
</dbReference>
<dbReference type="InterPro" id="IPR023165">
    <property type="entry name" value="rRNA_Ade_diMease-like_C"/>
</dbReference>
<dbReference type="InterPro" id="IPR020596">
    <property type="entry name" value="rRNA_Ade_Mease_Trfase_CS"/>
</dbReference>
<dbReference type="InterPro" id="IPR020598">
    <property type="entry name" value="rRNA_Ade_methylase_Trfase_N"/>
</dbReference>
<dbReference type="InterPro" id="IPR011530">
    <property type="entry name" value="rRNA_adenine_dimethylase"/>
</dbReference>
<dbReference type="InterPro" id="IPR029063">
    <property type="entry name" value="SAM-dependent_MTases_sf"/>
</dbReference>
<dbReference type="NCBIfam" id="TIGR00755">
    <property type="entry name" value="ksgA"/>
    <property type="match status" value="1"/>
</dbReference>
<dbReference type="PANTHER" id="PTHR11727">
    <property type="entry name" value="DIMETHYLADENOSINE TRANSFERASE"/>
    <property type="match status" value="1"/>
</dbReference>
<dbReference type="PANTHER" id="PTHR11727:SF7">
    <property type="entry name" value="DIMETHYLADENOSINE TRANSFERASE-RELATED"/>
    <property type="match status" value="1"/>
</dbReference>
<dbReference type="Pfam" id="PF00398">
    <property type="entry name" value="RrnaAD"/>
    <property type="match status" value="1"/>
</dbReference>
<dbReference type="SMART" id="SM00650">
    <property type="entry name" value="rADc"/>
    <property type="match status" value="1"/>
</dbReference>
<dbReference type="SUPFAM" id="SSF53335">
    <property type="entry name" value="S-adenosyl-L-methionine-dependent methyltransferases"/>
    <property type="match status" value="1"/>
</dbReference>
<dbReference type="PROSITE" id="PS01131">
    <property type="entry name" value="RRNA_A_DIMETH"/>
    <property type="match status" value="1"/>
</dbReference>
<dbReference type="PROSITE" id="PS51689">
    <property type="entry name" value="SAM_RNA_A_N6_MT"/>
    <property type="match status" value="1"/>
</dbReference>
<keyword id="KW-0963">Cytoplasm</keyword>
<keyword id="KW-0489">Methyltransferase</keyword>
<keyword id="KW-1185">Reference proteome</keyword>
<keyword id="KW-0694">RNA-binding</keyword>
<keyword id="KW-0698">rRNA processing</keyword>
<keyword id="KW-0949">S-adenosyl-L-methionine</keyword>
<keyword id="KW-0808">Transferase</keyword>
<sequence>MNNRVHQGHLARKRFGQNFLNDQFVIDSIVSAINPQKGQAMVEIGPGLAALTEPVGERLDQLTVIELDRDLAARLQTHPFLGPKLTIYQQDAMTFNFGELAAKMGQPLRVFGNLPYNISTPLMFHLFSYTDAIADMHFMLQKEVVNRLVAGPNSKAYGRLSVMAQYYCNVIPVLEVPPSAFTPPPKVDSAVVRLVPHATMPHPVKDVRVLSRITTEAFNQRRKTIRNSLGNLFSVEVLTGMGIDPAMRAENISVAQYCQMANYLAENAPLQES</sequence>
<reference key="1">
    <citation type="journal article" date="2007" name="J. Bacteriol.">
        <title>The genome sequence of avian pathogenic Escherichia coli strain O1:K1:H7 shares strong similarities with human extraintestinal pathogenic E. coli genomes.</title>
        <authorList>
            <person name="Johnson T.J."/>
            <person name="Kariyawasam S."/>
            <person name="Wannemuehler Y."/>
            <person name="Mangiamele P."/>
            <person name="Johnson S.J."/>
            <person name="Doetkott C."/>
            <person name="Skyberg J.A."/>
            <person name="Lynne A.M."/>
            <person name="Johnson J.R."/>
            <person name="Nolan L.K."/>
        </authorList>
    </citation>
    <scope>NUCLEOTIDE SEQUENCE [LARGE SCALE GENOMIC DNA]</scope>
</reference>
<proteinExistence type="inferred from homology"/>
<gene>
    <name evidence="1" type="primary">rsmA</name>
    <name evidence="1" type="synonym">ksgA</name>
    <name type="ordered locus">Ecok1_00460</name>
    <name type="ORF">APECO1_1931</name>
</gene>
<protein>
    <recommendedName>
        <fullName evidence="1">Ribosomal RNA small subunit methyltransferase A</fullName>
        <ecNumber evidence="1">2.1.1.182</ecNumber>
    </recommendedName>
    <alternativeName>
        <fullName evidence="1">16S rRNA (adenine(1518)-N(6)/adenine(1519)-N(6))-dimethyltransferase</fullName>
    </alternativeName>
    <alternativeName>
        <fullName evidence="1">16S rRNA dimethyladenosine transferase</fullName>
    </alternativeName>
    <alternativeName>
        <fullName evidence="1">16S rRNA dimethylase</fullName>
    </alternativeName>
    <alternativeName>
        <fullName evidence="1">S-adenosylmethionine-6-N', N'-adenosyl(rRNA) dimethyltransferase</fullName>
    </alternativeName>
</protein>
<organism>
    <name type="scientific">Escherichia coli O1:K1 / APEC</name>
    <dbReference type="NCBI Taxonomy" id="405955"/>
    <lineage>
        <taxon>Bacteria</taxon>
        <taxon>Pseudomonadati</taxon>
        <taxon>Pseudomonadota</taxon>
        <taxon>Gammaproteobacteria</taxon>
        <taxon>Enterobacterales</taxon>
        <taxon>Enterobacteriaceae</taxon>
        <taxon>Escherichia</taxon>
    </lineage>
</organism>
<name>RSMA_ECOK1</name>